<accession>Q8WMY2</accession>
<accession>A6QPZ8</accession>
<gene>
    <name type="primary">FDPS</name>
</gene>
<organism>
    <name type="scientific">Bos taurus</name>
    <name type="common">Bovine</name>
    <dbReference type="NCBI Taxonomy" id="9913"/>
    <lineage>
        <taxon>Eukaryota</taxon>
        <taxon>Metazoa</taxon>
        <taxon>Chordata</taxon>
        <taxon>Craniata</taxon>
        <taxon>Vertebrata</taxon>
        <taxon>Euteleostomi</taxon>
        <taxon>Mammalia</taxon>
        <taxon>Eutheria</taxon>
        <taxon>Laurasiatheria</taxon>
        <taxon>Artiodactyla</taxon>
        <taxon>Ruminantia</taxon>
        <taxon>Pecora</taxon>
        <taxon>Bovidae</taxon>
        <taxon>Bovinae</taxon>
        <taxon>Bos</taxon>
    </lineage>
</organism>
<protein>
    <recommendedName>
        <fullName>Farnesyl pyrophosphate synthase</fullName>
        <shortName>FPP synthase</shortName>
        <shortName>FPS</shortName>
        <ecNumber>2.5.1.10</ecNumber>
    </recommendedName>
    <alternativeName>
        <fullName>(2E,6E)-farnesyl diphosphate synthase</fullName>
    </alternativeName>
    <alternativeName>
        <fullName>Dimethylallyltranstransferase</fullName>
        <ecNumber>2.5.1.1</ecNumber>
    </alternativeName>
    <alternativeName>
        <fullName>Farnesyl diphosphate synthase</fullName>
    </alternativeName>
    <alternativeName>
        <fullName>Geranyltranstransferase</fullName>
    </alternativeName>
</protein>
<dbReference type="EC" id="2.5.1.10"/>
<dbReference type="EC" id="2.5.1.1"/>
<dbReference type="EMBL" id="AF461050">
    <property type="protein sequence ID" value="AAL58886.1"/>
    <property type="molecule type" value="mRNA"/>
</dbReference>
<dbReference type="EMBL" id="BC149572">
    <property type="protein sequence ID" value="AAI49573.1"/>
    <property type="molecule type" value="mRNA"/>
</dbReference>
<dbReference type="RefSeq" id="NP_803463.1">
    <property type="nucleotide sequence ID" value="NM_177497.2"/>
</dbReference>
<dbReference type="RefSeq" id="XP_005203665.1">
    <property type="nucleotide sequence ID" value="XM_005203608.4"/>
</dbReference>
<dbReference type="SMR" id="Q8WMY2"/>
<dbReference type="FunCoup" id="Q8WMY2">
    <property type="interactions" value="2495"/>
</dbReference>
<dbReference type="STRING" id="9913.ENSBTAP00000014472"/>
<dbReference type="PeptideAtlas" id="Q8WMY2"/>
<dbReference type="GeneID" id="281156"/>
<dbReference type="KEGG" id="bta:281156"/>
<dbReference type="CTD" id="2224"/>
<dbReference type="VEuPathDB" id="HostDB:ENSBTAG00000003948"/>
<dbReference type="HOGENOM" id="CLU_028376_0_1_1"/>
<dbReference type="InParanoid" id="Q8WMY2"/>
<dbReference type="OrthoDB" id="10257492at2759"/>
<dbReference type="UniPathway" id="UPA00259">
    <property type="reaction ID" value="UER00368"/>
</dbReference>
<dbReference type="UniPathway" id="UPA00260">
    <property type="reaction ID" value="UER00369"/>
</dbReference>
<dbReference type="Proteomes" id="UP000009136">
    <property type="component" value="Chromosome 3"/>
</dbReference>
<dbReference type="Bgee" id="ENSBTAG00000003948">
    <property type="expression patterns" value="Expressed in diaphragm and 106 other cell types or tissues"/>
</dbReference>
<dbReference type="GO" id="GO:0031410">
    <property type="term" value="C:cytoplasmic vesicle"/>
    <property type="evidence" value="ECO:0000318"/>
    <property type="project" value="GO_Central"/>
</dbReference>
<dbReference type="GO" id="GO:0004337">
    <property type="term" value="F:(2E,6E)-farnesyl diphosphate synthase activity"/>
    <property type="evidence" value="ECO:0007669"/>
    <property type="project" value="UniProtKB-EC"/>
</dbReference>
<dbReference type="GO" id="GO:0004161">
    <property type="term" value="F:dimethylallyltranstransferase activity"/>
    <property type="evidence" value="ECO:0007669"/>
    <property type="project" value="UniProtKB-EC"/>
</dbReference>
<dbReference type="GO" id="GO:0046872">
    <property type="term" value="F:metal ion binding"/>
    <property type="evidence" value="ECO:0007669"/>
    <property type="project" value="UniProtKB-KW"/>
</dbReference>
<dbReference type="GO" id="GO:0006695">
    <property type="term" value="P:cholesterol biosynthetic process"/>
    <property type="evidence" value="ECO:0007669"/>
    <property type="project" value="UniProtKB-KW"/>
</dbReference>
<dbReference type="GO" id="GO:0045337">
    <property type="term" value="P:farnesyl diphosphate biosynthetic process"/>
    <property type="evidence" value="ECO:0007669"/>
    <property type="project" value="UniProtKB-UniPathway"/>
</dbReference>
<dbReference type="GO" id="GO:0033384">
    <property type="term" value="P:geranyl diphosphate biosynthetic process"/>
    <property type="evidence" value="ECO:0007669"/>
    <property type="project" value="UniProtKB-UniPathway"/>
</dbReference>
<dbReference type="CDD" id="cd00685">
    <property type="entry name" value="Trans_IPPS_HT"/>
    <property type="match status" value="1"/>
</dbReference>
<dbReference type="FunFam" id="1.10.600.10:FF:000052">
    <property type="entry name" value="Farnesyl pyrophosphate synthase"/>
    <property type="match status" value="1"/>
</dbReference>
<dbReference type="Gene3D" id="1.10.600.10">
    <property type="entry name" value="Farnesyl Diphosphate Synthase"/>
    <property type="match status" value="1"/>
</dbReference>
<dbReference type="InterPro" id="IPR039702">
    <property type="entry name" value="FPS1-like"/>
</dbReference>
<dbReference type="InterPro" id="IPR008949">
    <property type="entry name" value="Isoprenoid_synthase_dom_sf"/>
</dbReference>
<dbReference type="InterPro" id="IPR000092">
    <property type="entry name" value="Polyprenyl_synt"/>
</dbReference>
<dbReference type="InterPro" id="IPR033749">
    <property type="entry name" value="Polyprenyl_synt_CS"/>
</dbReference>
<dbReference type="PANTHER" id="PTHR11525:SF0">
    <property type="entry name" value="FARNESYL PYROPHOSPHATE SYNTHASE"/>
    <property type="match status" value="1"/>
</dbReference>
<dbReference type="PANTHER" id="PTHR11525">
    <property type="entry name" value="FARNESYL-PYROPHOSPHATE SYNTHETASE"/>
    <property type="match status" value="1"/>
</dbReference>
<dbReference type="Pfam" id="PF00348">
    <property type="entry name" value="polyprenyl_synt"/>
    <property type="match status" value="1"/>
</dbReference>
<dbReference type="SFLD" id="SFLDS00005">
    <property type="entry name" value="Isoprenoid_Synthase_Type_I"/>
    <property type="match status" value="1"/>
</dbReference>
<dbReference type="SFLD" id="SFLDG01017">
    <property type="entry name" value="Polyprenyl_Transferase_Like"/>
    <property type="match status" value="1"/>
</dbReference>
<dbReference type="SUPFAM" id="SSF48576">
    <property type="entry name" value="Terpenoid synthases"/>
    <property type="match status" value="1"/>
</dbReference>
<dbReference type="PROSITE" id="PS00723">
    <property type="entry name" value="POLYPRENYL_SYNTHASE_1"/>
    <property type="match status" value="1"/>
</dbReference>
<dbReference type="PROSITE" id="PS00444">
    <property type="entry name" value="POLYPRENYL_SYNTHASE_2"/>
    <property type="match status" value="1"/>
</dbReference>
<feature type="chain" id="PRO_0000237610" description="Farnesyl pyrophosphate synthase">
    <location>
        <begin position="1"/>
        <end position="353"/>
    </location>
</feature>
<feature type="binding site" evidence="2">
    <location>
        <position position="57"/>
    </location>
    <ligand>
        <name>isopentenyl diphosphate</name>
        <dbReference type="ChEBI" id="CHEBI:128769"/>
    </ligand>
</feature>
<feature type="binding site" evidence="2">
    <location>
        <position position="60"/>
    </location>
    <ligand>
        <name>isopentenyl diphosphate</name>
        <dbReference type="ChEBI" id="CHEBI:128769"/>
    </ligand>
</feature>
<feature type="binding site" evidence="2">
    <location>
        <position position="96"/>
    </location>
    <ligand>
        <name>isopentenyl diphosphate</name>
        <dbReference type="ChEBI" id="CHEBI:128769"/>
    </ligand>
</feature>
<feature type="binding site" evidence="2">
    <location>
        <position position="103"/>
    </location>
    <ligand>
        <name>Mg(2+)</name>
        <dbReference type="ChEBI" id="CHEBI:18420"/>
        <label>1</label>
    </ligand>
</feature>
<feature type="binding site" evidence="2">
    <location>
        <position position="103"/>
    </location>
    <ligand>
        <name>Mg(2+)</name>
        <dbReference type="ChEBI" id="CHEBI:18420"/>
        <label>2</label>
    </ligand>
</feature>
<feature type="binding site" evidence="2">
    <location>
        <position position="107"/>
    </location>
    <ligand>
        <name>Mg(2+)</name>
        <dbReference type="ChEBI" id="CHEBI:18420"/>
        <label>1</label>
    </ligand>
</feature>
<feature type="binding site" evidence="2">
    <location>
        <position position="107"/>
    </location>
    <ligand>
        <name>Mg(2+)</name>
        <dbReference type="ChEBI" id="CHEBI:18420"/>
        <label>2</label>
    </ligand>
</feature>
<feature type="binding site" evidence="1">
    <location>
        <position position="112"/>
    </location>
    <ligand>
        <name>dimethylallyl diphosphate</name>
        <dbReference type="ChEBI" id="CHEBI:57623"/>
    </ligand>
</feature>
<feature type="binding site" evidence="2">
    <location>
        <position position="113"/>
    </location>
    <ligand>
        <name>isopentenyl diphosphate</name>
        <dbReference type="ChEBI" id="CHEBI:128769"/>
    </ligand>
</feature>
<feature type="binding site" evidence="1">
    <location>
        <position position="200"/>
    </location>
    <ligand>
        <name>dimethylallyl diphosphate</name>
        <dbReference type="ChEBI" id="CHEBI:57623"/>
    </ligand>
</feature>
<feature type="binding site" evidence="1">
    <location>
        <position position="201"/>
    </location>
    <ligand>
        <name>dimethylallyl diphosphate</name>
        <dbReference type="ChEBI" id="CHEBI:57623"/>
    </ligand>
</feature>
<feature type="binding site" evidence="1">
    <location>
        <position position="240"/>
    </location>
    <ligand>
        <name>dimethylallyl diphosphate</name>
        <dbReference type="ChEBI" id="CHEBI:57623"/>
    </ligand>
</feature>
<feature type="binding site" evidence="1">
    <location>
        <position position="257"/>
    </location>
    <ligand>
        <name>dimethylallyl diphosphate</name>
        <dbReference type="ChEBI" id="CHEBI:57623"/>
    </ligand>
</feature>
<feature type="binding site" evidence="1">
    <location>
        <position position="266"/>
    </location>
    <ligand>
        <name>dimethylallyl diphosphate</name>
        <dbReference type="ChEBI" id="CHEBI:57623"/>
    </ligand>
</feature>
<feature type="site" description="Important for determining product chain length" evidence="1">
    <location>
        <position position="98"/>
    </location>
</feature>
<feature type="site" description="Important for determining product chain length" evidence="1">
    <location>
        <position position="99"/>
    </location>
</feature>
<feature type="modified residue" description="N6-(2-hydroxyisobutyryl)lysine; alternate" evidence="2">
    <location>
        <position position="57"/>
    </location>
</feature>
<feature type="modified residue" description="N6-acetyllysine; alternate" evidence="2">
    <location>
        <position position="57"/>
    </location>
</feature>
<comment type="function">
    <text evidence="1">Key enzyme in isoprenoid biosynthesis which catalyzes the formation of farnesyl diphosphate (FPP), a precursor for several classes of essential metabolites including sterols, dolichols, carotenoids, and ubiquinones. FPP also serves as substrate for protein farnesylation and geranylgeranylation. Catalyzes the sequential condensation of isopentenyl pyrophosphate with the allylic pyrophosphates, dimethylallyl pyrophosphate, and then with the resultant geranylpyrophosphate to the ultimate product farnesyl pyrophosphate (By similarity).</text>
</comment>
<comment type="catalytic activity">
    <reaction>
        <text>isopentenyl diphosphate + dimethylallyl diphosphate = (2E)-geranyl diphosphate + diphosphate</text>
        <dbReference type="Rhea" id="RHEA:22408"/>
        <dbReference type="ChEBI" id="CHEBI:33019"/>
        <dbReference type="ChEBI" id="CHEBI:57623"/>
        <dbReference type="ChEBI" id="CHEBI:58057"/>
        <dbReference type="ChEBI" id="CHEBI:128769"/>
        <dbReference type="EC" id="2.5.1.1"/>
    </reaction>
</comment>
<comment type="catalytic activity">
    <reaction>
        <text>isopentenyl diphosphate + (2E)-geranyl diphosphate = (2E,6E)-farnesyl diphosphate + diphosphate</text>
        <dbReference type="Rhea" id="RHEA:19361"/>
        <dbReference type="ChEBI" id="CHEBI:33019"/>
        <dbReference type="ChEBI" id="CHEBI:58057"/>
        <dbReference type="ChEBI" id="CHEBI:128769"/>
        <dbReference type="ChEBI" id="CHEBI:175763"/>
        <dbReference type="EC" id="2.5.1.10"/>
    </reaction>
</comment>
<comment type="cofactor">
    <cofactor evidence="1">
        <name>Mg(2+)</name>
        <dbReference type="ChEBI" id="CHEBI:18420"/>
    </cofactor>
    <text evidence="1">Binds 2 Mg(2+) ions per subunit.</text>
</comment>
<comment type="activity regulation">
    <text evidence="1">Inactivated by interferon-induced RSAD2. This inactivation may result of disruption of lipid rafts at the plasma membrane, and thus have an antiviral effect since many enveloped viruses need lipid rafts to bud efficiently out of the cell (By similarity).</text>
</comment>
<comment type="pathway">
    <text>Isoprenoid biosynthesis; farnesyl diphosphate biosynthesis; farnesyl diphosphate from geranyl diphosphate and isopentenyl diphosphate: step 1/1.</text>
</comment>
<comment type="pathway">
    <text>Isoprenoid biosynthesis; geranyl diphosphate biosynthesis; geranyl diphosphate from dimethylallyl diphosphate and isopentenyl diphosphate: step 1/1.</text>
</comment>
<comment type="subunit">
    <text evidence="1 3">Homodimer. Interacts with RSAD2 (By similarity). Interacts with bovine leukemia virus (BLV) protein G4.</text>
</comment>
<comment type="subcellular location">
    <subcellularLocation>
        <location evidence="1">Cytoplasm</location>
    </subcellularLocation>
</comment>
<comment type="similarity">
    <text evidence="4">Belongs to the FPP/GGPP synthase family.</text>
</comment>
<name>FPPS_BOVIN</name>
<evidence type="ECO:0000250" key="1"/>
<evidence type="ECO:0000250" key="2">
    <source>
        <dbReference type="UniProtKB" id="P14324"/>
    </source>
</evidence>
<evidence type="ECO:0000269" key="3">
    <source>
    </source>
</evidence>
<evidence type="ECO:0000305" key="4"/>
<proteinExistence type="evidence at protein level"/>
<reference key="1">
    <citation type="journal article" date="2002" name="J. Virol.">
        <title>Oncoviral bovine leukemia virus G4 and human T-cell leukemia virus type 1 p13(II) accessory proteins interact with farnesyl pyrophosphate synthetase.</title>
        <authorList>
            <person name="Lefebvre L."/>
            <person name="Vanderplasschen A."/>
            <person name="Ciminale V."/>
            <person name="Heremans H."/>
            <person name="Dangoisse O."/>
            <person name="Jauniaux J.-C."/>
            <person name="Toussaint J.-F."/>
            <person name="Zelnik V."/>
            <person name="Burny A."/>
            <person name="Kettmann R."/>
            <person name="Willems L."/>
        </authorList>
    </citation>
    <scope>NUCLEOTIDE SEQUENCE [MRNA]</scope>
    <scope>INTERACTION WITH BLV G4</scope>
</reference>
<reference key="2">
    <citation type="submission" date="2007-07" db="EMBL/GenBank/DDBJ databases">
        <authorList>
            <consortium name="NIH - Mammalian Gene Collection (MGC) project"/>
        </authorList>
    </citation>
    <scope>NUCLEOTIDE SEQUENCE [LARGE SCALE MRNA]</scope>
    <source>
        <strain>Hereford</strain>
        <tissue>Fetal liver</tissue>
    </source>
</reference>
<sequence>MNGDQKLDAYAQERQDFIQHFSQIVKVLTEEDIGHPEIGDAITRLKEVLEYNAIGGKYNRGLTVVITFRELVEPGKQDPDSLQRALTVGWCVELLQAFFLVSDDIMDSSLTRRGQTCWYQKPGIGLDAINDAFLLESSIYRLLKLYCREQPYYLDLIELFLQSSYQTEIGQTLDLITAPQGNVDLGRFTEKRYKSIVKYKTAFYSFYLPVAAAMYMAGIDGEKEHAHAKKILLEMGEFFQIQDDYLDLFGDPSMTGKIGTDIQDNKCSWLVVQCLQRASPEQRQILQENYGQKEAEKVARVKALYEEMNLSAVYMQYEEDSYNHIMGLIEQYAAPLPPAIFLGLAQKIYKRKK</sequence>
<keyword id="KW-0007">Acetylation</keyword>
<keyword id="KW-0152">Cholesterol biosynthesis</keyword>
<keyword id="KW-0153">Cholesterol metabolism</keyword>
<keyword id="KW-0963">Cytoplasm</keyword>
<keyword id="KW-0945">Host-virus interaction</keyword>
<keyword id="KW-0379">Hydroxylation</keyword>
<keyword id="KW-0414">Isoprene biosynthesis</keyword>
<keyword id="KW-0444">Lipid biosynthesis</keyword>
<keyword id="KW-0443">Lipid metabolism</keyword>
<keyword id="KW-0460">Magnesium</keyword>
<keyword id="KW-0479">Metal-binding</keyword>
<keyword id="KW-1185">Reference proteome</keyword>
<keyword id="KW-0752">Steroid biosynthesis</keyword>
<keyword id="KW-0753">Steroid metabolism</keyword>
<keyword id="KW-0756">Sterol biosynthesis</keyword>
<keyword id="KW-1207">Sterol metabolism</keyword>
<keyword id="KW-0808">Transferase</keyword>